<sequence length="510" mass="57892">MTDAVQNETVQEASAQEENKLIAERRAKLDQIRKSCKANGHPNDFRRDSLAGDLQKEFGEKSKEELEALNHVVAIAGRVMAKRGPFLVIQETSGRIQAYADKDVQKVLKDKYQGLDIGDIIGVKGALHKSGKGDLYVNMEEYELLTKALRPLPEKFHGLTDQEMRYRQRYVDLIVNEDSRNAFVVRSKVMSAIRNFMISKQFMEVETPMMHVIPGGASARPFITHHNALDMPMYLRIAPELYLKRLVVGGFDRVFEINRNFRNEGLSPRHNPEFTMMEFYMAYADYKDLMDLTEELLSSVALEVLGSTSMPYGEHTVEFGGTYTRMSMFEAIKHYNPDHAQIQALTEEDIQNRDLMVSIAKSVHVEVEPFWTCGQLLEEIFGETAEPKLMQPTFITGYPADISPLARRSDDNPFFTDRFEFFIGGREVANGFSELNDAEDQDARFKAQVEAKESGDDEAMFYDADYITALEHGLPPTAGQGIGIDRLVMLLTNTHTIRDVILFPAMRPQA</sequence>
<name>SYK_VIBVY</name>
<comment type="catalytic activity">
    <reaction evidence="1">
        <text>tRNA(Lys) + L-lysine + ATP = L-lysyl-tRNA(Lys) + AMP + diphosphate</text>
        <dbReference type="Rhea" id="RHEA:20792"/>
        <dbReference type="Rhea" id="RHEA-COMP:9696"/>
        <dbReference type="Rhea" id="RHEA-COMP:9697"/>
        <dbReference type="ChEBI" id="CHEBI:30616"/>
        <dbReference type="ChEBI" id="CHEBI:32551"/>
        <dbReference type="ChEBI" id="CHEBI:33019"/>
        <dbReference type="ChEBI" id="CHEBI:78442"/>
        <dbReference type="ChEBI" id="CHEBI:78529"/>
        <dbReference type="ChEBI" id="CHEBI:456215"/>
        <dbReference type="EC" id="6.1.1.6"/>
    </reaction>
</comment>
<comment type="cofactor">
    <cofactor evidence="1">
        <name>Mg(2+)</name>
        <dbReference type="ChEBI" id="CHEBI:18420"/>
    </cofactor>
    <text evidence="1">Binds 3 Mg(2+) ions per subunit.</text>
</comment>
<comment type="subunit">
    <text evidence="1">Homodimer.</text>
</comment>
<comment type="subcellular location">
    <subcellularLocation>
        <location evidence="1">Cytoplasm</location>
    </subcellularLocation>
</comment>
<comment type="similarity">
    <text evidence="1">Belongs to the class-II aminoacyl-tRNA synthetase family.</text>
</comment>
<reference key="1">
    <citation type="journal article" date="2003" name="Genome Res.">
        <title>Comparative genome analysis of Vibrio vulnificus, a marine pathogen.</title>
        <authorList>
            <person name="Chen C.-Y."/>
            <person name="Wu K.-M."/>
            <person name="Chang Y.-C."/>
            <person name="Chang C.-H."/>
            <person name="Tsai H.-C."/>
            <person name="Liao T.-L."/>
            <person name="Liu Y.-M."/>
            <person name="Chen H.-J."/>
            <person name="Shen A.B.-T."/>
            <person name="Li J.-C."/>
            <person name="Su T.-L."/>
            <person name="Shao C.-P."/>
            <person name="Lee C.-T."/>
            <person name="Hor L.-I."/>
            <person name="Tsai S.-F."/>
        </authorList>
    </citation>
    <scope>NUCLEOTIDE SEQUENCE [LARGE SCALE GENOMIC DNA]</scope>
    <source>
        <strain>YJ016</strain>
    </source>
</reference>
<dbReference type="EC" id="6.1.1.6" evidence="1"/>
<dbReference type="EMBL" id="BA000037">
    <property type="protein sequence ID" value="BAC93433.1"/>
    <property type="molecule type" value="Genomic_DNA"/>
</dbReference>
<dbReference type="RefSeq" id="WP_011149542.1">
    <property type="nucleotide sequence ID" value="NC_005139.1"/>
</dbReference>
<dbReference type="SMR" id="Q7MNP6"/>
<dbReference type="STRING" id="672.VV93_v1c06080"/>
<dbReference type="KEGG" id="vvy:VV0669"/>
<dbReference type="PATRIC" id="fig|196600.6.peg.688"/>
<dbReference type="eggNOG" id="COG1190">
    <property type="taxonomic scope" value="Bacteria"/>
</dbReference>
<dbReference type="HOGENOM" id="CLU_008255_6_0_6"/>
<dbReference type="Proteomes" id="UP000002675">
    <property type="component" value="Chromosome I"/>
</dbReference>
<dbReference type="GO" id="GO:0005829">
    <property type="term" value="C:cytosol"/>
    <property type="evidence" value="ECO:0007669"/>
    <property type="project" value="TreeGrafter"/>
</dbReference>
<dbReference type="GO" id="GO:0005524">
    <property type="term" value="F:ATP binding"/>
    <property type="evidence" value="ECO:0007669"/>
    <property type="project" value="UniProtKB-UniRule"/>
</dbReference>
<dbReference type="GO" id="GO:0004824">
    <property type="term" value="F:lysine-tRNA ligase activity"/>
    <property type="evidence" value="ECO:0007669"/>
    <property type="project" value="UniProtKB-UniRule"/>
</dbReference>
<dbReference type="GO" id="GO:0000287">
    <property type="term" value="F:magnesium ion binding"/>
    <property type="evidence" value="ECO:0007669"/>
    <property type="project" value="UniProtKB-UniRule"/>
</dbReference>
<dbReference type="GO" id="GO:0000049">
    <property type="term" value="F:tRNA binding"/>
    <property type="evidence" value="ECO:0007669"/>
    <property type="project" value="TreeGrafter"/>
</dbReference>
<dbReference type="GO" id="GO:0006430">
    <property type="term" value="P:lysyl-tRNA aminoacylation"/>
    <property type="evidence" value="ECO:0007669"/>
    <property type="project" value="UniProtKB-UniRule"/>
</dbReference>
<dbReference type="CDD" id="cd00775">
    <property type="entry name" value="LysRS_core"/>
    <property type="match status" value="1"/>
</dbReference>
<dbReference type="CDD" id="cd04322">
    <property type="entry name" value="LysRS_N"/>
    <property type="match status" value="1"/>
</dbReference>
<dbReference type="FunFam" id="2.40.50.140:FF:000024">
    <property type="entry name" value="Lysine--tRNA ligase"/>
    <property type="match status" value="1"/>
</dbReference>
<dbReference type="FunFam" id="3.30.930.10:FF:000001">
    <property type="entry name" value="Lysine--tRNA ligase"/>
    <property type="match status" value="1"/>
</dbReference>
<dbReference type="Gene3D" id="3.30.930.10">
    <property type="entry name" value="Bira Bifunctional Protein, Domain 2"/>
    <property type="match status" value="1"/>
</dbReference>
<dbReference type="Gene3D" id="2.40.50.140">
    <property type="entry name" value="Nucleic acid-binding proteins"/>
    <property type="match status" value="1"/>
</dbReference>
<dbReference type="HAMAP" id="MF_00252">
    <property type="entry name" value="Lys_tRNA_synth_class2"/>
    <property type="match status" value="1"/>
</dbReference>
<dbReference type="InterPro" id="IPR004364">
    <property type="entry name" value="Aa-tRNA-synt_II"/>
</dbReference>
<dbReference type="InterPro" id="IPR006195">
    <property type="entry name" value="aa-tRNA-synth_II"/>
</dbReference>
<dbReference type="InterPro" id="IPR045864">
    <property type="entry name" value="aa-tRNA-synth_II/BPL/LPL"/>
</dbReference>
<dbReference type="InterPro" id="IPR002313">
    <property type="entry name" value="Lys-tRNA-ligase_II"/>
</dbReference>
<dbReference type="InterPro" id="IPR044136">
    <property type="entry name" value="Lys-tRNA-ligase_II_N"/>
</dbReference>
<dbReference type="InterPro" id="IPR018149">
    <property type="entry name" value="Lys-tRNA-synth_II_C"/>
</dbReference>
<dbReference type="InterPro" id="IPR012340">
    <property type="entry name" value="NA-bd_OB-fold"/>
</dbReference>
<dbReference type="InterPro" id="IPR004365">
    <property type="entry name" value="NA-bd_OB_tRNA"/>
</dbReference>
<dbReference type="NCBIfam" id="TIGR00499">
    <property type="entry name" value="lysS_bact"/>
    <property type="match status" value="1"/>
</dbReference>
<dbReference type="NCBIfam" id="NF001756">
    <property type="entry name" value="PRK00484.1"/>
    <property type="match status" value="1"/>
</dbReference>
<dbReference type="PANTHER" id="PTHR42918:SF15">
    <property type="entry name" value="LYSINE--TRNA LIGASE, CHLOROPLASTIC_MITOCHONDRIAL"/>
    <property type="match status" value="1"/>
</dbReference>
<dbReference type="PANTHER" id="PTHR42918">
    <property type="entry name" value="LYSYL-TRNA SYNTHETASE"/>
    <property type="match status" value="1"/>
</dbReference>
<dbReference type="Pfam" id="PF00152">
    <property type="entry name" value="tRNA-synt_2"/>
    <property type="match status" value="1"/>
</dbReference>
<dbReference type="Pfam" id="PF01336">
    <property type="entry name" value="tRNA_anti-codon"/>
    <property type="match status" value="1"/>
</dbReference>
<dbReference type="PRINTS" id="PR00982">
    <property type="entry name" value="TRNASYNTHLYS"/>
</dbReference>
<dbReference type="SUPFAM" id="SSF55681">
    <property type="entry name" value="Class II aaRS and biotin synthetases"/>
    <property type="match status" value="1"/>
</dbReference>
<dbReference type="SUPFAM" id="SSF50249">
    <property type="entry name" value="Nucleic acid-binding proteins"/>
    <property type="match status" value="1"/>
</dbReference>
<dbReference type="PROSITE" id="PS50862">
    <property type="entry name" value="AA_TRNA_LIGASE_II"/>
    <property type="match status" value="1"/>
</dbReference>
<feature type="chain" id="PRO_0000152703" description="Lysine--tRNA ligase">
    <location>
        <begin position="1"/>
        <end position="510"/>
    </location>
</feature>
<feature type="binding site" evidence="1">
    <location>
        <position position="420"/>
    </location>
    <ligand>
        <name>Mg(2+)</name>
        <dbReference type="ChEBI" id="CHEBI:18420"/>
        <label>1</label>
    </ligand>
</feature>
<feature type="binding site" evidence="1">
    <location>
        <position position="427"/>
    </location>
    <ligand>
        <name>Mg(2+)</name>
        <dbReference type="ChEBI" id="CHEBI:18420"/>
        <label>1</label>
    </ligand>
</feature>
<feature type="binding site" evidence="1">
    <location>
        <position position="427"/>
    </location>
    <ligand>
        <name>Mg(2+)</name>
        <dbReference type="ChEBI" id="CHEBI:18420"/>
        <label>2</label>
    </ligand>
</feature>
<gene>
    <name evidence="1" type="primary">lysS</name>
    <name type="ordered locus">VV0669</name>
</gene>
<keyword id="KW-0030">Aminoacyl-tRNA synthetase</keyword>
<keyword id="KW-0067">ATP-binding</keyword>
<keyword id="KW-0963">Cytoplasm</keyword>
<keyword id="KW-0436">Ligase</keyword>
<keyword id="KW-0460">Magnesium</keyword>
<keyword id="KW-0479">Metal-binding</keyword>
<keyword id="KW-0547">Nucleotide-binding</keyword>
<keyword id="KW-0648">Protein biosynthesis</keyword>
<accession>Q7MNP6</accession>
<organism>
    <name type="scientific">Vibrio vulnificus (strain YJ016)</name>
    <dbReference type="NCBI Taxonomy" id="196600"/>
    <lineage>
        <taxon>Bacteria</taxon>
        <taxon>Pseudomonadati</taxon>
        <taxon>Pseudomonadota</taxon>
        <taxon>Gammaproteobacteria</taxon>
        <taxon>Vibrionales</taxon>
        <taxon>Vibrionaceae</taxon>
        <taxon>Vibrio</taxon>
    </lineage>
</organism>
<evidence type="ECO:0000255" key="1">
    <source>
        <dbReference type="HAMAP-Rule" id="MF_00252"/>
    </source>
</evidence>
<proteinExistence type="inferred from homology"/>
<protein>
    <recommendedName>
        <fullName evidence="1">Lysine--tRNA ligase</fullName>
        <ecNumber evidence="1">6.1.1.6</ecNumber>
    </recommendedName>
    <alternativeName>
        <fullName evidence="1">Lysyl-tRNA synthetase</fullName>
        <shortName evidence="1">LysRS</shortName>
    </alternativeName>
</protein>